<dbReference type="EMBL" id="AF349962">
    <property type="protein sequence ID" value="AAK30203.1"/>
    <property type="molecule type" value="mRNA"/>
</dbReference>
<dbReference type="SMR" id="Q9AT34"/>
<dbReference type="OMA" id="IINSMYI"/>
<dbReference type="GO" id="GO:0005737">
    <property type="term" value="C:cytoplasm"/>
    <property type="evidence" value="ECO:0007669"/>
    <property type="project" value="UniProtKB-SubCell"/>
</dbReference>
<dbReference type="GO" id="GO:1990904">
    <property type="term" value="C:ribonucleoprotein complex"/>
    <property type="evidence" value="ECO:0007669"/>
    <property type="project" value="UniProtKB-KW"/>
</dbReference>
<dbReference type="GO" id="GO:0005840">
    <property type="term" value="C:ribosome"/>
    <property type="evidence" value="ECO:0007669"/>
    <property type="project" value="UniProtKB-KW"/>
</dbReference>
<dbReference type="GO" id="GO:0003735">
    <property type="term" value="F:structural constituent of ribosome"/>
    <property type="evidence" value="ECO:0007669"/>
    <property type="project" value="InterPro"/>
</dbReference>
<dbReference type="GO" id="GO:0006412">
    <property type="term" value="P:translation"/>
    <property type="evidence" value="ECO:0007669"/>
    <property type="project" value="InterPro"/>
</dbReference>
<dbReference type="FunFam" id="3.30.1370.30:FF:000001">
    <property type="entry name" value="40S ribosomal protein S15a"/>
    <property type="match status" value="1"/>
</dbReference>
<dbReference type="FunFam" id="3.30.1490.10:FF:000002">
    <property type="entry name" value="40S ribosomal protein S15a"/>
    <property type="match status" value="1"/>
</dbReference>
<dbReference type="Gene3D" id="3.30.1370.30">
    <property type="match status" value="1"/>
</dbReference>
<dbReference type="Gene3D" id="3.30.1490.10">
    <property type="match status" value="1"/>
</dbReference>
<dbReference type="HAMAP" id="MF_01302_A">
    <property type="entry name" value="Ribosomal_uS8_A"/>
    <property type="match status" value="1"/>
</dbReference>
<dbReference type="InterPro" id="IPR000630">
    <property type="entry name" value="Ribosomal_uS8"/>
</dbReference>
<dbReference type="InterPro" id="IPR047863">
    <property type="entry name" value="Ribosomal_uS8_CS"/>
</dbReference>
<dbReference type="InterPro" id="IPR035987">
    <property type="entry name" value="Ribosomal_uS8_sf"/>
</dbReference>
<dbReference type="NCBIfam" id="NF003115">
    <property type="entry name" value="PRK04034.1"/>
    <property type="match status" value="1"/>
</dbReference>
<dbReference type="PANTHER" id="PTHR11758">
    <property type="entry name" value="40S RIBOSOMAL PROTEIN S15A"/>
    <property type="match status" value="1"/>
</dbReference>
<dbReference type="Pfam" id="PF00410">
    <property type="entry name" value="Ribosomal_S8"/>
    <property type="match status" value="1"/>
</dbReference>
<dbReference type="SUPFAM" id="SSF56047">
    <property type="entry name" value="Ribosomal protein S8"/>
    <property type="match status" value="1"/>
</dbReference>
<dbReference type="PROSITE" id="PS00053">
    <property type="entry name" value="RIBOSOMAL_S8"/>
    <property type="match status" value="1"/>
</dbReference>
<feature type="initiator methionine" description="Removed" evidence="1">
    <location>
        <position position="1"/>
    </location>
</feature>
<feature type="chain" id="PRO_0000126614" description="Small ribosomal subunit protein uS8">
    <location>
        <begin position="2"/>
        <end position="130"/>
    </location>
</feature>
<reference key="1">
    <citation type="submission" date="2001-02" db="EMBL/GenBank/DDBJ databases">
        <authorList>
            <person name="Zhang L."/>
            <person name="Yang Z."/>
            <person name="Liu Y."/>
            <person name="Huang M."/>
            <person name="Wu N."/>
        </authorList>
    </citation>
    <scope>NUCLEOTIDE SEQUENCE [MRNA]</scope>
</reference>
<proteinExistence type="evidence at transcript level"/>
<accession>Q9AT34</accession>
<gene>
    <name type="primary">RPS15A</name>
</gene>
<evidence type="ECO:0000250" key="1"/>
<evidence type="ECO:0000305" key="2"/>
<comment type="subcellular location">
    <subcellularLocation>
        <location evidence="1">Cytoplasm</location>
    </subcellularLocation>
</comment>
<comment type="similarity">
    <text evidence="2">Belongs to the universal ribosomal protein uS8 family.</text>
</comment>
<sequence length="130" mass="14818">MVRVSVLNDALKSMFNAEKRGKRQVMIRPSSKVVIKFLMVMQKHGYIGEFEYVDDHRSGKIVVELNGRLNKCGVISPRFDVGVKEIEPWTARLLPSRQFGYIVLTTSAGIMDHEEARRKNVGGKVLGFFY</sequence>
<organism>
    <name type="scientific">Daucus carota</name>
    <name type="common">Wild carrot</name>
    <dbReference type="NCBI Taxonomy" id="4039"/>
    <lineage>
        <taxon>Eukaryota</taxon>
        <taxon>Viridiplantae</taxon>
        <taxon>Streptophyta</taxon>
        <taxon>Embryophyta</taxon>
        <taxon>Tracheophyta</taxon>
        <taxon>Spermatophyta</taxon>
        <taxon>Magnoliopsida</taxon>
        <taxon>eudicotyledons</taxon>
        <taxon>Gunneridae</taxon>
        <taxon>Pentapetalae</taxon>
        <taxon>asterids</taxon>
        <taxon>campanulids</taxon>
        <taxon>Apiales</taxon>
        <taxon>Apiaceae</taxon>
        <taxon>Apioideae</taxon>
        <taxon>Scandiceae</taxon>
        <taxon>Daucinae</taxon>
        <taxon>Daucus</taxon>
        <taxon>Daucus sect. Daucus</taxon>
    </lineage>
</organism>
<keyword id="KW-0963">Cytoplasm</keyword>
<keyword id="KW-0687">Ribonucleoprotein</keyword>
<keyword id="KW-0689">Ribosomal protein</keyword>
<protein>
    <recommendedName>
        <fullName evidence="2">Small ribosomal subunit protein uS8</fullName>
    </recommendedName>
    <alternativeName>
        <fullName>40S ribosomal protein S15a</fullName>
    </alternativeName>
</protein>
<name>RS15A_DAUCA</name>